<name>RK16_PAUCH</name>
<comment type="subunit">
    <text evidence="1">Part of the 50S ribosomal subunit.</text>
</comment>
<comment type="subcellular location">
    <subcellularLocation>
        <location>Plastid</location>
        <location>Organellar chromatophore</location>
    </subcellularLocation>
</comment>
<comment type="similarity">
    <text evidence="2">Belongs to the universal ribosomal protein uL16 family.</text>
</comment>
<comment type="sequence caution" evidence="2">
    <conflict type="erroneous initiation">
        <sequence resource="EMBL-CDS" id="ACB43020"/>
    </conflict>
</comment>
<geneLocation type="organellar chromatophore"/>
<gene>
    <name type="primary">rpl16</name>
    <name type="ordered locus">PCC_0590</name>
</gene>
<proteinExistence type="inferred from homology"/>
<accession>B1X501</accession>
<sequence length="149" mass="17013">MLSPKRVKFRKQQRGRMRGIATRGNTIAFGQFALQAQECGWITSRQIEASRRAMTRYVKRGGRIWIRVFPDKPVTMRAAETRMGSGKGNPEFWVAVIKPGRILFEMGGPEITETIAREAMRLAQYKLPLKTKFLILNSQESETLVTPEV</sequence>
<organism>
    <name type="scientific">Paulinella chromatophora</name>
    <dbReference type="NCBI Taxonomy" id="39717"/>
    <lineage>
        <taxon>Eukaryota</taxon>
        <taxon>Sar</taxon>
        <taxon>Rhizaria</taxon>
        <taxon>Cercozoa</taxon>
        <taxon>Imbricatea</taxon>
        <taxon>Silicofilosea</taxon>
        <taxon>Euglyphida</taxon>
        <taxon>Paulinellidae</taxon>
        <taxon>Paulinella</taxon>
    </lineage>
</organism>
<evidence type="ECO:0000250" key="1"/>
<evidence type="ECO:0000305" key="2"/>
<reference key="1">
    <citation type="journal article" date="2008" name="Curr. Biol.">
        <title>Chromatophore genome sequence of Paulinella sheds light on acquisition of photosynthesis by eukaryotes.</title>
        <authorList>
            <person name="Nowack E.C.M."/>
            <person name="Melkonian M."/>
            <person name="Gloeckner G."/>
        </authorList>
    </citation>
    <scope>NUCLEOTIDE SEQUENCE [LARGE SCALE GENOMIC DNA]</scope>
</reference>
<feature type="chain" id="PRO_0000354660" description="Large ribosomal subunit protein uL16c">
    <location>
        <begin position="1"/>
        <end position="149"/>
    </location>
</feature>
<keyword id="KW-0994">Organellar chromatophore</keyword>
<keyword id="KW-0934">Plastid</keyword>
<keyword id="KW-0687">Ribonucleoprotein</keyword>
<keyword id="KW-0689">Ribosomal protein</keyword>
<protein>
    <recommendedName>
        <fullName evidence="2">Large ribosomal subunit protein uL16c</fullName>
    </recommendedName>
    <alternativeName>
        <fullName>50S ribosomal protein L16, organellar chromatophore</fullName>
    </alternativeName>
</protein>
<dbReference type="EMBL" id="CP000815">
    <property type="protein sequence ID" value="ACB43020.1"/>
    <property type="status" value="ALT_INIT"/>
    <property type="molecule type" value="Genomic_DNA"/>
</dbReference>
<dbReference type="RefSeq" id="YP_002049230.1">
    <property type="nucleotide sequence ID" value="NC_011087.1"/>
</dbReference>
<dbReference type="SMR" id="B1X501"/>
<dbReference type="GeneID" id="6481790"/>
<dbReference type="GO" id="GO:0005762">
    <property type="term" value="C:mitochondrial large ribosomal subunit"/>
    <property type="evidence" value="ECO:0007669"/>
    <property type="project" value="TreeGrafter"/>
</dbReference>
<dbReference type="GO" id="GO:0070111">
    <property type="term" value="C:organellar chromatophore"/>
    <property type="evidence" value="ECO:0007669"/>
    <property type="project" value="UniProtKB-SubCell"/>
</dbReference>
<dbReference type="GO" id="GO:0009536">
    <property type="term" value="C:plastid"/>
    <property type="evidence" value="ECO:0007669"/>
    <property type="project" value="UniProtKB-KW"/>
</dbReference>
<dbReference type="GO" id="GO:0019843">
    <property type="term" value="F:rRNA binding"/>
    <property type="evidence" value="ECO:0007669"/>
    <property type="project" value="InterPro"/>
</dbReference>
<dbReference type="GO" id="GO:0003735">
    <property type="term" value="F:structural constituent of ribosome"/>
    <property type="evidence" value="ECO:0007669"/>
    <property type="project" value="InterPro"/>
</dbReference>
<dbReference type="GO" id="GO:0032543">
    <property type="term" value="P:mitochondrial translation"/>
    <property type="evidence" value="ECO:0007669"/>
    <property type="project" value="TreeGrafter"/>
</dbReference>
<dbReference type="CDD" id="cd01433">
    <property type="entry name" value="Ribosomal_L16_L10e"/>
    <property type="match status" value="1"/>
</dbReference>
<dbReference type="FunFam" id="3.90.1170.10:FF:000001">
    <property type="entry name" value="50S ribosomal protein L16"/>
    <property type="match status" value="1"/>
</dbReference>
<dbReference type="Gene3D" id="3.90.1170.10">
    <property type="entry name" value="Ribosomal protein L10e/L16"/>
    <property type="match status" value="1"/>
</dbReference>
<dbReference type="HAMAP" id="MF_01342">
    <property type="entry name" value="Ribosomal_uL16"/>
    <property type="match status" value="1"/>
</dbReference>
<dbReference type="InterPro" id="IPR047873">
    <property type="entry name" value="Ribosomal_uL16"/>
</dbReference>
<dbReference type="InterPro" id="IPR000114">
    <property type="entry name" value="Ribosomal_uL16_bact-type"/>
</dbReference>
<dbReference type="InterPro" id="IPR020798">
    <property type="entry name" value="Ribosomal_uL16_CS"/>
</dbReference>
<dbReference type="InterPro" id="IPR016180">
    <property type="entry name" value="Ribosomal_uL16_dom"/>
</dbReference>
<dbReference type="InterPro" id="IPR036920">
    <property type="entry name" value="Ribosomal_uL16_sf"/>
</dbReference>
<dbReference type="NCBIfam" id="TIGR01164">
    <property type="entry name" value="rplP_bact"/>
    <property type="match status" value="1"/>
</dbReference>
<dbReference type="PANTHER" id="PTHR12220">
    <property type="entry name" value="50S/60S RIBOSOMAL PROTEIN L16"/>
    <property type="match status" value="1"/>
</dbReference>
<dbReference type="PANTHER" id="PTHR12220:SF13">
    <property type="entry name" value="LARGE RIBOSOMAL SUBUNIT PROTEIN UL16M"/>
    <property type="match status" value="1"/>
</dbReference>
<dbReference type="Pfam" id="PF00252">
    <property type="entry name" value="Ribosomal_L16"/>
    <property type="match status" value="1"/>
</dbReference>
<dbReference type="PRINTS" id="PR00060">
    <property type="entry name" value="RIBOSOMALL16"/>
</dbReference>
<dbReference type="SUPFAM" id="SSF54686">
    <property type="entry name" value="Ribosomal protein L16p/L10e"/>
    <property type="match status" value="1"/>
</dbReference>
<dbReference type="PROSITE" id="PS00586">
    <property type="entry name" value="RIBOSOMAL_L16_1"/>
    <property type="match status" value="1"/>
</dbReference>
<dbReference type="PROSITE" id="PS00701">
    <property type="entry name" value="RIBOSOMAL_L16_2"/>
    <property type="match status" value="1"/>
</dbReference>